<name>EFP_POLSJ</name>
<proteinExistence type="inferred from homology"/>
<sequence>MKIAQEIRAGNVIMHGKDPMVVLKTEYSRGGRNSATVRMKLKSLIANFNTEVVFKADDKMDQVILDKKECTYSYFADPMYICMDSEYNQYEVEAENMGDSLNYLQDGMELEVVFYDGKAISVEVPTSVQREITWTEPAVKGDTSGKVLKPAKIATGFEIGVPIFVAQGDVVEIDTRTGEYRKRV</sequence>
<accession>Q128Q4</accession>
<evidence type="ECO:0000255" key="1">
    <source>
        <dbReference type="HAMAP-Rule" id="MF_00141"/>
    </source>
</evidence>
<organism>
    <name type="scientific">Polaromonas sp. (strain JS666 / ATCC BAA-500)</name>
    <dbReference type="NCBI Taxonomy" id="296591"/>
    <lineage>
        <taxon>Bacteria</taxon>
        <taxon>Pseudomonadati</taxon>
        <taxon>Pseudomonadota</taxon>
        <taxon>Betaproteobacteria</taxon>
        <taxon>Burkholderiales</taxon>
        <taxon>Comamonadaceae</taxon>
        <taxon>Polaromonas</taxon>
    </lineage>
</organism>
<feature type="chain" id="PRO_1000010802" description="Elongation factor P">
    <location>
        <begin position="1"/>
        <end position="184"/>
    </location>
</feature>
<gene>
    <name evidence="1" type="primary">efp</name>
    <name type="ordered locus">Bpro_3074</name>
</gene>
<dbReference type="EMBL" id="CP000316">
    <property type="protein sequence ID" value="ABE44988.1"/>
    <property type="molecule type" value="Genomic_DNA"/>
</dbReference>
<dbReference type="RefSeq" id="WP_011483984.1">
    <property type="nucleotide sequence ID" value="NC_007948.1"/>
</dbReference>
<dbReference type="SMR" id="Q128Q4"/>
<dbReference type="STRING" id="296591.Bpro_3074"/>
<dbReference type="KEGG" id="pol:Bpro_3074"/>
<dbReference type="eggNOG" id="COG0231">
    <property type="taxonomic scope" value="Bacteria"/>
</dbReference>
<dbReference type="HOGENOM" id="CLU_074944_2_1_4"/>
<dbReference type="OrthoDB" id="9801844at2"/>
<dbReference type="UniPathway" id="UPA00345"/>
<dbReference type="Proteomes" id="UP000001983">
    <property type="component" value="Chromosome"/>
</dbReference>
<dbReference type="GO" id="GO:0005737">
    <property type="term" value="C:cytoplasm"/>
    <property type="evidence" value="ECO:0007669"/>
    <property type="project" value="UniProtKB-SubCell"/>
</dbReference>
<dbReference type="GO" id="GO:0003746">
    <property type="term" value="F:translation elongation factor activity"/>
    <property type="evidence" value="ECO:0007669"/>
    <property type="project" value="UniProtKB-UniRule"/>
</dbReference>
<dbReference type="GO" id="GO:0043043">
    <property type="term" value="P:peptide biosynthetic process"/>
    <property type="evidence" value="ECO:0007669"/>
    <property type="project" value="InterPro"/>
</dbReference>
<dbReference type="CDD" id="cd05794">
    <property type="entry name" value="S1_EF-P_repeat_2"/>
    <property type="match status" value="1"/>
</dbReference>
<dbReference type="FunFam" id="2.30.30.30:FF:000003">
    <property type="entry name" value="Elongation factor P"/>
    <property type="match status" value="1"/>
</dbReference>
<dbReference type="FunFam" id="2.40.50.140:FF:000004">
    <property type="entry name" value="Elongation factor P"/>
    <property type="match status" value="1"/>
</dbReference>
<dbReference type="FunFam" id="2.40.50.140:FF:000009">
    <property type="entry name" value="Elongation factor P"/>
    <property type="match status" value="1"/>
</dbReference>
<dbReference type="Gene3D" id="2.30.30.30">
    <property type="match status" value="1"/>
</dbReference>
<dbReference type="Gene3D" id="2.40.50.140">
    <property type="entry name" value="Nucleic acid-binding proteins"/>
    <property type="match status" value="2"/>
</dbReference>
<dbReference type="HAMAP" id="MF_00141">
    <property type="entry name" value="EF_P"/>
    <property type="match status" value="1"/>
</dbReference>
<dbReference type="InterPro" id="IPR015365">
    <property type="entry name" value="Elong-fact-P_C"/>
</dbReference>
<dbReference type="InterPro" id="IPR012340">
    <property type="entry name" value="NA-bd_OB-fold"/>
</dbReference>
<dbReference type="InterPro" id="IPR014722">
    <property type="entry name" value="Rib_uL2_dom2"/>
</dbReference>
<dbReference type="InterPro" id="IPR020599">
    <property type="entry name" value="Transl_elong_fac_P/YeiP"/>
</dbReference>
<dbReference type="InterPro" id="IPR013185">
    <property type="entry name" value="Transl_elong_KOW-like"/>
</dbReference>
<dbReference type="InterPro" id="IPR001059">
    <property type="entry name" value="Transl_elong_P/YeiP_cen"/>
</dbReference>
<dbReference type="InterPro" id="IPR013852">
    <property type="entry name" value="Transl_elong_P/YeiP_CS"/>
</dbReference>
<dbReference type="InterPro" id="IPR011768">
    <property type="entry name" value="Transl_elongation_fac_P"/>
</dbReference>
<dbReference type="InterPro" id="IPR008991">
    <property type="entry name" value="Translation_prot_SH3-like_sf"/>
</dbReference>
<dbReference type="NCBIfam" id="TIGR00038">
    <property type="entry name" value="efp"/>
    <property type="match status" value="1"/>
</dbReference>
<dbReference type="NCBIfam" id="NF001810">
    <property type="entry name" value="PRK00529.1"/>
    <property type="match status" value="1"/>
</dbReference>
<dbReference type="PANTHER" id="PTHR30053">
    <property type="entry name" value="ELONGATION FACTOR P"/>
    <property type="match status" value="1"/>
</dbReference>
<dbReference type="PANTHER" id="PTHR30053:SF12">
    <property type="entry name" value="ELONGATION FACTOR P (EF-P) FAMILY PROTEIN"/>
    <property type="match status" value="1"/>
</dbReference>
<dbReference type="Pfam" id="PF01132">
    <property type="entry name" value="EFP"/>
    <property type="match status" value="1"/>
</dbReference>
<dbReference type="Pfam" id="PF08207">
    <property type="entry name" value="EFP_N"/>
    <property type="match status" value="1"/>
</dbReference>
<dbReference type="Pfam" id="PF09285">
    <property type="entry name" value="Elong-fact-P_C"/>
    <property type="match status" value="1"/>
</dbReference>
<dbReference type="PIRSF" id="PIRSF005901">
    <property type="entry name" value="EF-P"/>
    <property type="match status" value="1"/>
</dbReference>
<dbReference type="SMART" id="SM01185">
    <property type="entry name" value="EFP"/>
    <property type="match status" value="1"/>
</dbReference>
<dbReference type="SMART" id="SM00841">
    <property type="entry name" value="Elong-fact-P_C"/>
    <property type="match status" value="1"/>
</dbReference>
<dbReference type="SUPFAM" id="SSF50249">
    <property type="entry name" value="Nucleic acid-binding proteins"/>
    <property type="match status" value="2"/>
</dbReference>
<dbReference type="SUPFAM" id="SSF50104">
    <property type="entry name" value="Translation proteins SH3-like domain"/>
    <property type="match status" value="1"/>
</dbReference>
<dbReference type="PROSITE" id="PS01275">
    <property type="entry name" value="EFP"/>
    <property type="match status" value="1"/>
</dbReference>
<keyword id="KW-0963">Cytoplasm</keyword>
<keyword id="KW-0251">Elongation factor</keyword>
<keyword id="KW-0648">Protein biosynthesis</keyword>
<keyword id="KW-1185">Reference proteome</keyword>
<reference key="1">
    <citation type="journal article" date="2008" name="Appl. Environ. Microbiol.">
        <title>The genome of Polaromonas sp. strain JS666: insights into the evolution of a hydrocarbon- and xenobiotic-degrading bacterium, and features of relevance to biotechnology.</title>
        <authorList>
            <person name="Mattes T.E."/>
            <person name="Alexander A.K."/>
            <person name="Richardson P.M."/>
            <person name="Munk A.C."/>
            <person name="Han C.S."/>
            <person name="Stothard P."/>
            <person name="Coleman N.V."/>
        </authorList>
    </citation>
    <scope>NUCLEOTIDE SEQUENCE [LARGE SCALE GENOMIC DNA]</scope>
    <source>
        <strain>JS666 / ATCC BAA-500</strain>
    </source>
</reference>
<comment type="function">
    <text evidence="1">Involved in peptide bond synthesis. Stimulates efficient translation and peptide-bond synthesis on native or reconstituted 70S ribosomes in vitro. Probably functions indirectly by altering the affinity of the ribosome for aminoacyl-tRNA, thus increasing their reactivity as acceptors for peptidyl transferase.</text>
</comment>
<comment type="pathway">
    <text evidence="1">Protein biosynthesis; polypeptide chain elongation.</text>
</comment>
<comment type="subcellular location">
    <subcellularLocation>
        <location evidence="1">Cytoplasm</location>
    </subcellularLocation>
</comment>
<comment type="similarity">
    <text evidence="1">Belongs to the elongation factor P family.</text>
</comment>
<protein>
    <recommendedName>
        <fullName evidence="1">Elongation factor P</fullName>
        <shortName evidence="1">EF-P</shortName>
    </recommendedName>
</protein>